<evidence type="ECO:0000255" key="1">
    <source>
        <dbReference type="HAMAP-Rule" id="MF_00191"/>
    </source>
</evidence>
<comment type="function">
    <text evidence="1">Catalyzes the conversion of 1-hydroxy-2-methyl-2-(E)-butenyl 4-diphosphate (HMBPP) into a mixture of isopentenyl diphosphate (IPP) and dimethylallyl diphosphate (DMAPP). Acts in the terminal step of the DOXP/MEP pathway for isoprenoid precursor biosynthesis.</text>
</comment>
<comment type="catalytic activity">
    <reaction evidence="1">
        <text>isopentenyl diphosphate + 2 oxidized [2Fe-2S]-[ferredoxin] + H2O = (2E)-4-hydroxy-3-methylbut-2-enyl diphosphate + 2 reduced [2Fe-2S]-[ferredoxin] + 2 H(+)</text>
        <dbReference type="Rhea" id="RHEA:24488"/>
        <dbReference type="Rhea" id="RHEA-COMP:10000"/>
        <dbReference type="Rhea" id="RHEA-COMP:10001"/>
        <dbReference type="ChEBI" id="CHEBI:15377"/>
        <dbReference type="ChEBI" id="CHEBI:15378"/>
        <dbReference type="ChEBI" id="CHEBI:33737"/>
        <dbReference type="ChEBI" id="CHEBI:33738"/>
        <dbReference type="ChEBI" id="CHEBI:128753"/>
        <dbReference type="ChEBI" id="CHEBI:128769"/>
        <dbReference type="EC" id="1.17.7.4"/>
    </reaction>
</comment>
<comment type="catalytic activity">
    <reaction evidence="1">
        <text>dimethylallyl diphosphate + 2 oxidized [2Fe-2S]-[ferredoxin] + H2O = (2E)-4-hydroxy-3-methylbut-2-enyl diphosphate + 2 reduced [2Fe-2S]-[ferredoxin] + 2 H(+)</text>
        <dbReference type="Rhea" id="RHEA:24825"/>
        <dbReference type="Rhea" id="RHEA-COMP:10000"/>
        <dbReference type="Rhea" id="RHEA-COMP:10001"/>
        <dbReference type="ChEBI" id="CHEBI:15377"/>
        <dbReference type="ChEBI" id="CHEBI:15378"/>
        <dbReference type="ChEBI" id="CHEBI:33737"/>
        <dbReference type="ChEBI" id="CHEBI:33738"/>
        <dbReference type="ChEBI" id="CHEBI:57623"/>
        <dbReference type="ChEBI" id="CHEBI:128753"/>
        <dbReference type="EC" id="1.17.7.4"/>
    </reaction>
</comment>
<comment type="cofactor">
    <cofactor evidence="1">
        <name>[4Fe-4S] cluster</name>
        <dbReference type="ChEBI" id="CHEBI:49883"/>
    </cofactor>
    <text evidence="1">Binds 1 [4Fe-4S] cluster per subunit.</text>
</comment>
<comment type="pathway">
    <text evidence="1">Isoprenoid biosynthesis; dimethylallyl diphosphate biosynthesis; dimethylallyl diphosphate from (2E)-4-hydroxy-3-methylbutenyl diphosphate: step 1/1.</text>
</comment>
<comment type="pathway">
    <text evidence="1">Isoprenoid biosynthesis; isopentenyl diphosphate biosynthesis via DXP pathway; isopentenyl diphosphate from 1-deoxy-D-xylulose 5-phosphate: step 6/6.</text>
</comment>
<comment type="similarity">
    <text evidence="1">Belongs to the IspH family.</text>
</comment>
<gene>
    <name evidence="1" type="primary">ispH</name>
    <name type="ordered locus">FTH_0325</name>
</gene>
<feature type="chain" id="PRO_1000021124" description="4-hydroxy-3-methylbut-2-enyl diphosphate reductase">
    <location>
        <begin position="1"/>
        <end position="318"/>
    </location>
</feature>
<feature type="active site" description="Proton donor" evidence="1">
    <location>
        <position position="126"/>
    </location>
</feature>
<feature type="binding site" evidence="1">
    <location>
        <position position="12"/>
    </location>
    <ligand>
        <name>[4Fe-4S] cluster</name>
        <dbReference type="ChEBI" id="CHEBI:49883"/>
    </ligand>
</feature>
<feature type="binding site" evidence="1">
    <location>
        <position position="41"/>
    </location>
    <ligand>
        <name>(2E)-4-hydroxy-3-methylbut-2-enyl diphosphate</name>
        <dbReference type="ChEBI" id="CHEBI:128753"/>
    </ligand>
</feature>
<feature type="binding site" evidence="1">
    <location>
        <position position="41"/>
    </location>
    <ligand>
        <name>dimethylallyl diphosphate</name>
        <dbReference type="ChEBI" id="CHEBI:57623"/>
    </ligand>
</feature>
<feature type="binding site" evidence="1">
    <location>
        <position position="41"/>
    </location>
    <ligand>
        <name>isopentenyl diphosphate</name>
        <dbReference type="ChEBI" id="CHEBI:128769"/>
    </ligand>
</feature>
<feature type="binding site" evidence="1">
    <location>
        <position position="74"/>
    </location>
    <ligand>
        <name>(2E)-4-hydroxy-3-methylbut-2-enyl diphosphate</name>
        <dbReference type="ChEBI" id="CHEBI:128753"/>
    </ligand>
</feature>
<feature type="binding site" evidence="1">
    <location>
        <position position="74"/>
    </location>
    <ligand>
        <name>dimethylallyl diphosphate</name>
        <dbReference type="ChEBI" id="CHEBI:57623"/>
    </ligand>
</feature>
<feature type="binding site" evidence="1">
    <location>
        <position position="74"/>
    </location>
    <ligand>
        <name>isopentenyl diphosphate</name>
        <dbReference type="ChEBI" id="CHEBI:128769"/>
    </ligand>
</feature>
<feature type="binding site" evidence="1">
    <location>
        <position position="96"/>
    </location>
    <ligand>
        <name>[4Fe-4S] cluster</name>
        <dbReference type="ChEBI" id="CHEBI:49883"/>
    </ligand>
</feature>
<feature type="binding site" evidence="1">
    <location>
        <position position="124"/>
    </location>
    <ligand>
        <name>(2E)-4-hydroxy-3-methylbut-2-enyl diphosphate</name>
        <dbReference type="ChEBI" id="CHEBI:128753"/>
    </ligand>
</feature>
<feature type="binding site" evidence="1">
    <location>
        <position position="124"/>
    </location>
    <ligand>
        <name>dimethylallyl diphosphate</name>
        <dbReference type="ChEBI" id="CHEBI:57623"/>
    </ligand>
</feature>
<feature type="binding site" evidence="1">
    <location>
        <position position="124"/>
    </location>
    <ligand>
        <name>isopentenyl diphosphate</name>
        <dbReference type="ChEBI" id="CHEBI:128769"/>
    </ligand>
</feature>
<feature type="binding site" evidence="1">
    <location>
        <position position="167"/>
    </location>
    <ligand>
        <name>(2E)-4-hydroxy-3-methylbut-2-enyl diphosphate</name>
        <dbReference type="ChEBI" id="CHEBI:128753"/>
    </ligand>
</feature>
<feature type="binding site" evidence="1">
    <location>
        <position position="197"/>
    </location>
    <ligand>
        <name>[4Fe-4S] cluster</name>
        <dbReference type="ChEBI" id="CHEBI:49883"/>
    </ligand>
</feature>
<feature type="binding site" evidence="1">
    <location>
        <position position="225"/>
    </location>
    <ligand>
        <name>(2E)-4-hydroxy-3-methylbut-2-enyl diphosphate</name>
        <dbReference type="ChEBI" id="CHEBI:128753"/>
    </ligand>
</feature>
<feature type="binding site" evidence="1">
    <location>
        <position position="225"/>
    </location>
    <ligand>
        <name>dimethylallyl diphosphate</name>
        <dbReference type="ChEBI" id="CHEBI:57623"/>
    </ligand>
</feature>
<feature type="binding site" evidence="1">
    <location>
        <position position="225"/>
    </location>
    <ligand>
        <name>isopentenyl diphosphate</name>
        <dbReference type="ChEBI" id="CHEBI:128769"/>
    </ligand>
</feature>
<feature type="binding site" evidence="1">
    <location>
        <position position="226"/>
    </location>
    <ligand>
        <name>(2E)-4-hydroxy-3-methylbut-2-enyl diphosphate</name>
        <dbReference type="ChEBI" id="CHEBI:128753"/>
    </ligand>
</feature>
<feature type="binding site" evidence="1">
    <location>
        <position position="226"/>
    </location>
    <ligand>
        <name>dimethylallyl diphosphate</name>
        <dbReference type="ChEBI" id="CHEBI:57623"/>
    </ligand>
</feature>
<feature type="binding site" evidence="1">
    <location>
        <position position="226"/>
    </location>
    <ligand>
        <name>isopentenyl diphosphate</name>
        <dbReference type="ChEBI" id="CHEBI:128769"/>
    </ligand>
</feature>
<feature type="binding site" evidence="1">
    <location>
        <position position="227"/>
    </location>
    <ligand>
        <name>(2E)-4-hydroxy-3-methylbut-2-enyl diphosphate</name>
        <dbReference type="ChEBI" id="CHEBI:128753"/>
    </ligand>
</feature>
<feature type="binding site" evidence="1">
    <location>
        <position position="227"/>
    </location>
    <ligand>
        <name>dimethylallyl diphosphate</name>
        <dbReference type="ChEBI" id="CHEBI:57623"/>
    </ligand>
</feature>
<feature type="binding site" evidence="1">
    <location>
        <position position="227"/>
    </location>
    <ligand>
        <name>isopentenyl diphosphate</name>
        <dbReference type="ChEBI" id="CHEBI:128769"/>
    </ligand>
</feature>
<feature type="binding site" evidence="1">
    <location>
        <position position="269"/>
    </location>
    <ligand>
        <name>(2E)-4-hydroxy-3-methylbut-2-enyl diphosphate</name>
        <dbReference type="ChEBI" id="CHEBI:128753"/>
    </ligand>
</feature>
<feature type="binding site" evidence="1">
    <location>
        <position position="269"/>
    </location>
    <ligand>
        <name>dimethylallyl diphosphate</name>
        <dbReference type="ChEBI" id="CHEBI:57623"/>
    </ligand>
</feature>
<feature type="binding site" evidence="1">
    <location>
        <position position="269"/>
    </location>
    <ligand>
        <name>isopentenyl diphosphate</name>
        <dbReference type="ChEBI" id="CHEBI:128769"/>
    </ligand>
</feature>
<reference key="1">
    <citation type="journal article" date="2006" name="J. Bacteriol.">
        <title>Chromosome rearrangement and diversification of Francisella tularensis revealed by the type B (OSU18) genome sequence.</title>
        <authorList>
            <person name="Petrosino J.F."/>
            <person name="Xiang Q."/>
            <person name="Karpathy S.E."/>
            <person name="Jiang H."/>
            <person name="Yerrapragada S."/>
            <person name="Liu Y."/>
            <person name="Gioia J."/>
            <person name="Hemphill L."/>
            <person name="Gonzalez A."/>
            <person name="Raghavan T.M."/>
            <person name="Uzman A."/>
            <person name="Fox G.E."/>
            <person name="Highlander S."/>
            <person name="Reichard M."/>
            <person name="Morton R.J."/>
            <person name="Clinkenbeard K.D."/>
            <person name="Weinstock G.M."/>
        </authorList>
    </citation>
    <scope>NUCLEOTIDE SEQUENCE [LARGE SCALE GENOMIC DNA]</scope>
    <source>
        <strain>OSU18</strain>
    </source>
</reference>
<name>ISPH_FRATO</name>
<proteinExistence type="inferred from homology"/>
<sequence length="318" mass="35162">MKILLANPRGFCAGVSRAVETVEKVLEVEKSPVYVRHEVVHNKVVVDSLKKKGVVFVKEVDEVPDDAVCIFSAHGVSLKVEEAAAKKNLVLYDATCPLVTKVHRGVRLASNNDAECILIGHKGHPEVQGTMGQYRSKKGAIYLIESEEDLNKLTIKDPDNLYYATQTTLSVDETHGIIQALKDKYPNIKGPKKEDICYATQNRQTAIKAMLKHIDVLVVVGSQNSSNSNRLKELATLEGIDAYLVDNPKDVDKLWFDNKKVCGVSAGASAPEYLVQQIISQISKVCSTEVEEFEGIKEEVYFPLPRLLKQKIGTGKVE</sequence>
<accession>Q0BNK1</accession>
<organism>
    <name type="scientific">Francisella tularensis subsp. holarctica (strain OSU18)</name>
    <dbReference type="NCBI Taxonomy" id="393011"/>
    <lineage>
        <taxon>Bacteria</taxon>
        <taxon>Pseudomonadati</taxon>
        <taxon>Pseudomonadota</taxon>
        <taxon>Gammaproteobacteria</taxon>
        <taxon>Thiotrichales</taxon>
        <taxon>Francisellaceae</taxon>
        <taxon>Francisella</taxon>
    </lineage>
</organism>
<protein>
    <recommendedName>
        <fullName evidence="1">4-hydroxy-3-methylbut-2-enyl diphosphate reductase</fullName>
        <shortName evidence="1">HMBPP reductase</shortName>
        <ecNumber evidence="1">1.17.7.4</ecNumber>
    </recommendedName>
</protein>
<dbReference type="EC" id="1.17.7.4" evidence="1"/>
<dbReference type="EMBL" id="CP000437">
    <property type="protein sequence ID" value="ABI82333.1"/>
    <property type="molecule type" value="Genomic_DNA"/>
</dbReference>
<dbReference type="RefSeq" id="WP_003018366.1">
    <property type="nucleotide sequence ID" value="NC_017463.1"/>
</dbReference>
<dbReference type="SMR" id="Q0BNK1"/>
<dbReference type="KEGG" id="fth:FTH_0325"/>
<dbReference type="UniPathway" id="UPA00056">
    <property type="reaction ID" value="UER00097"/>
</dbReference>
<dbReference type="UniPathway" id="UPA00059">
    <property type="reaction ID" value="UER00105"/>
</dbReference>
<dbReference type="GO" id="GO:0051539">
    <property type="term" value="F:4 iron, 4 sulfur cluster binding"/>
    <property type="evidence" value="ECO:0007669"/>
    <property type="project" value="UniProtKB-UniRule"/>
</dbReference>
<dbReference type="GO" id="GO:0051745">
    <property type="term" value="F:4-hydroxy-3-methylbut-2-enyl diphosphate reductase activity"/>
    <property type="evidence" value="ECO:0007669"/>
    <property type="project" value="UniProtKB-UniRule"/>
</dbReference>
<dbReference type="GO" id="GO:0046872">
    <property type="term" value="F:metal ion binding"/>
    <property type="evidence" value="ECO:0007669"/>
    <property type="project" value="UniProtKB-KW"/>
</dbReference>
<dbReference type="GO" id="GO:0050992">
    <property type="term" value="P:dimethylallyl diphosphate biosynthetic process"/>
    <property type="evidence" value="ECO:0007669"/>
    <property type="project" value="UniProtKB-UniRule"/>
</dbReference>
<dbReference type="GO" id="GO:0019288">
    <property type="term" value="P:isopentenyl diphosphate biosynthetic process, methylerythritol 4-phosphate pathway"/>
    <property type="evidence" value="ECO:0007669"/>
    <property type="project" value="UniProtKB-UniRule"/>
</dbReference>
<dbReference type="GO" id="GO:0016114">
    <property type="term" value="P:terpenoid biosynthetic process"/>
    <property type="evidence" value="ECO:0007669"/>
    <property type="project" value="UniProtKB-UniRule"/>
</dbReference>
<dbReference type="CDD" id="cd13944">
    <property type="entry name" value="lytB_ispH"/>
    <property type="match status" value="1"/>
</dbReference>
<dbReference type="Gene3D" id="3.40.50.11270">
    <property type="match status" value="1"/>
</dbReference>
<dbReference type="Gene3D" id="3.40.1010.20">
    <property type="entry name" value="4-hydroxy-3-methylbut-2-enyl diphosphate reductase, catalytic domain"/>
    <property type="match status" value="2"/>
</dbReference>
<dbReference type="HAMAP" id="MF_00191">
    <property type="entry name" value="IspH"/>
    <property type="match status" value="1"/>
</dbReference>
<dbReference type="InterPro" id="IPR003451">
    <property type="entry name" value="LytB/IspH"/>
</dbReference>
<dbReference type="NCBIfam" id="TIGR00216">
    <property type="entry name" value="ispH_lytB"/>
    <property type="match status" value="1"/>
</dbReference>
<dbReference type="NCBIfam" id="NF002188">
    <property type="entry name" value="PRK01045.1-2"/>
    <property type="match status" value="1"/>
</dbReference>
<dbReference type="NCBIfam" id="NF002190">
    <property type="entry name" value="PRK01045.1-4"/>
    <property type="match status" value="1"/>
</dbReference>
<dbReference type="PANTHER" id="PTHR30426">
    <property type="entry name" value="4-HYDROXY-3-METHYLBUT-2-ENYL DIPHOSPHATE REDUCTASE"/>
    <property type="match status" value="1"/>
</dbReference>
<dbReference type="PANTHER" id="PTHR30426:SF0">
    <property type="entry name" value="4-HYDROXY-3-METHYLBUT-2-ENYL DIPHOSPHATE REDUCTASE"/>
    <property type="match status" value="1"/>
</dbReference>
<dbReference type="Pfam" id="PF02401">
    <property type="entry name" value="LYTB"/>
    <property type="match status" value="1"/>
</dbReference>
<keyword id="KW-0004">4Fe-4S</keyword>
<keyword id="KW-0408">Iron</keyword>
<keyword id="KW-0411">Iron-sulfur</keyword>
<keyword id="KW-0414">Isoprene biosynthesis</keyword>
<keyword id="KW-0479">Metal-binding</keyword>
<keyword id="KW-0560">Oxidoreductase</keyword>